<protein>
    <recommendedName>
        <fullName evidence="1">Large ribosomal subunit protein eL8</fullName>
    </recommendedName>
    <alternativeName>
        <fullName evidence="2">50S ribosomal protein L7Ae</fullName>
    </alternativeName>
    <alternativeName>
        <fullName evidence="1">Ribosomal protein L8e</fullName>
    </alternativeName>
</protein>
<reference key="1">
    <citation type="journal article" date="2002" name="Proc. Natl. Acad. Sci. U.S.A.">
        <title>The complete genome of hyperthermophile Methanopyrus kandleri AV19 and monophyly of archaeal methanogens.</title>
        <authorList>
            <person name="Slesarev A.I."/>
            <person name="Mezhevaya K.V."/>
            <person name="Makarova K.S."/>
            <person name="Polushin N.N."/>
            <person name="Shcherbinina O.V."/>
            <person name="Shakhova V.V."/>
            <person name="Belova G.I."/>
            <person name="Aravind L."/>
            <person name="Natale D.A."/>
            <person name="Rogozin I.B."/>
            <person name="Tatusov R.L."/>
            <person name="Wolf Y.I."/>
            <person name="Stetter K.O."/>
            <person name="Malykh A.G."/>
            <person name="Koonin E.V."/>
            <person name="Kozyavkin S.A."/>
        </authorList>
    </citation>
    <scope>NUCLEOTIDE SEQUENCE [LARGE SCALE GENOMIC DNA]</scope>
    <source>
        <strain>AV19 / DSM 6324 / JCM 9639 / NBRC 100938</strain>
    </source>
</reference>
<comment type="function">
    <text evidence="1">Multifunctional RNA-binding protein that recognizes the K-turn motif in ribosomal RNA, the RNA component of RNase P, box H/ACA, box C/D and box C'/D' sRNAs.</text>
</comment>
<comment type="subunit">
    <text evidence="1">Part of the 50S ribosomal subunit. Probably part of the RNase P complex.</text>
</comment>
<comment type="subcellular location">
    <subcellularLocation>
        <location evidence="1">Cytoplasm</location>
    </subcellularLocation>
</comment>
<comment type="similarity">
    <text evidence="1">Belongs to the eukaryotic ribosomal protein eL8 family.</text>
</comment>
<name>RL7A_METKA</name>
<sequence>MSKPMYVKFEVPEELAEKAYEALEIARDTGRIRKGTNETTKAVEREEAVLVLIAEDVDPEEVVAHLPELCDEKGIPYVYVPSKDELGAAAGIDVAAASACIIDPGDAKDLVDEIIEKVEELRE</sequence>
<organism>
    <name type="scientific">Methanopyrus kandleri (strain AV19 / DSM 6324 / JCM 9639 / NBRC 100938)</name>
    <dbReference type="NCBI Taxonomy" id="190192"/>
    <lineage>
        <taxon>Archaea</taxon>
        <taxon>Methanobacteriati</taxon>
        <taxon>Methanobacteriota</taxon>
        <taxon>Methanomada group</taxon>
        <taxon>Methanopyri</taxon>
        <taxon>Methanopyrales</taxon>
        <taxon>Methanopyraceae</taxon>
        <taxon>Methanopyrus</taxon>
    </lineage>
</organism>
<dbReference type="EMBL" id="AE009439">
    <property type="protein sequence ID" value="AAM02811.1"/>
    <property type="molecule type" value="Genomic_DNA"/>
</dbReference>
<dbReference type="RefSeq" id="WP_011019966.1">
    <property type="nucleotide sequence ID" value="NC_003551.1"/>
</dbReference>
<dbReference type="SMR" id="Q8TV03"/>
<dbReference type="FunCoup" id="Q8TV03">
    <property type="interactions" value="153"/>
</dbReference>
<dbReference type="STRING" id="190192.MK1598"/>
<dbReference type="PaxDb" id="190192-MK1598"/>
<dbReference type="EnsemblBacteria" id="AAM02811">
    <property type="protein sequence ID" value="AAM02811"/>
    <property type="gene ID" value="MK1598"/>
</dbReference>
<dbReference type="GeneID" id="1478193"/>
<dbReference type="KEGG" id="mka:MK1598"/>
<dbReference type="PATRIC" id="fig|190192.8.peg.1759"/>
<dbReference type="HOGENOM" id="CLU_084513_4_0_2"/>
<dbReference type="InParanoid" id="Q8TV03"/>
<dbReference type="OrthoDB" id="25810at2157"/>
<dbReference type="Proteomes" id="UP000001826">
    <property type="component" value="Chromosome"/>
</dbReference>
<dbReference type="GO" id="GO:0005737">
    <property type="term" value="C:cytoplasm"/>
    <property type="evidence" value="ECO:0007669"/>
    <property type="project" value="UniProtKB-SubCell"/>
</dbReference>
<dbReference type="GO" id="GO:1990904">
    <property type="term" value="C:ribonucleoprotein complex"/>
    <property type="evidence" value="ECO:0007669"/>
    <property type="project" value="UniProtKB-KW"/>
</dbReference>
<dbReference type="GO" id="GO:0005840">
    <property type="term" value="C:ribosome"/>
    <property type="evidence" value="ECO:0007669"/>
    <property type="project" value="UniProtKB-KW"/>
</dbReference>
<dbReference type="GO" id="GO:0004526">
    <property type="term" value="F:ribonuclease P activity"/>
    <property type="evidence" value="ECO:0007669"/>
    <property type="project" value="UniProtKB-UniRule"/>
</dbReference>
<dbReference type="GO" id="GO:0019843">
    <property type="term" value="F:rRNA binding"/>
    <property type="evidence" value="ECO:0007669"/>
    <property type="project" value="UniProtKB-KW"/>
</dbReference>
<dbReference type="GO" id="GO:0003735">
    <property type="term" value="F:structural constituent of ribosome"/>
    <property type="evidence" value="ECO:0007669"/>
    <property type="project" value="InterPro"/>
</dbReference>
<dbReference type="GO" id="GO:0042254">
    <property type="term" value="P:ribosome biogenesis"/>
    <property type="evidence" value="ECO:0007669"/>
    <property type="project" value="InterPro"/>
</dbReference>
<dbReference type="GO" id="GO:0006412">
    <property type="term" value="P:translation"/>
    <property type="evidence" value="ECO:0007669"/>
    <property type="project" value="UniProtKB-UniRule"/>
</dbReference>
<dbReference type="GO" id="GO:0001682">
    <property type="term" value="P:tRNA 5'-leader removal"/>
    <property type="evidence" value="ECO:0007669"/>
    <property type="project" value="UniProtKB-UniRule"/>
</dbReference>
<dbReference type="FunFam" id="3.30.1330.30:FF:000020">
    <property type="entry name" value="50S ribosomal protein L7Ae"/>
    <property type="match status" value="1"/>
</dbReference>
<dbReference type="Gene3D" id="3.30.1330.30">
    <property type="match status" value="1"/>
</dbReference>
<dbReference type="HAMAP" id="MF_00326">
    <property type="entry name" value="Ribosomal_eL8"/>
    <property type="match status" value="1"/>
</dbReference>
<dbReference type="InterPro" id="IPR050257">
    <property type="entry name" value="eL8/uL1-like"/>
</dbReference>
<dbReference type="InterPro" id="IPR029064">
    <property type="entry name" value="Ribosomal_eL30-like_sf"/>
</dbReference>
<dbReference type="InterPro" id="IPR004037">
    <property type="entry name" value="Ribosomal_eL8-like_CS"/>
</dbReference>
<dbReference type="InterPro" id="IPR004038">
    <property type="entry name" value="Ribosomal_eL8/eL30/eS12/Gad45"/>
</dbReference>
<dbReference type="InterPro" id="IPR018492">
    <property type="entry name" value="Ribosomal_eL8/Nhp2"/>
</dbReference>
<dbReference type="InterPro" id="IPR022481">
    <property type="entry name" value="Ribosomal_eL8_arc"/>
</dbReference>
<dbReference type="NCBIfam" id="TIGR03677">
    <property type="entry name" value="eL8_ribo"/>
    <property type="match status" value="1"/>
</dbReference>
<dbReference type="PANTHER" id="PTHR23105">
    <property type="entry name" value="RIBOSOMAL PROTEIN L7AE FAMILY MEMBER"/>
    <property type="match status" value="1"/>
</dbReference>
<dbReference type="Pfam" id="PF01248">
    <property type="entry name" value="Ribosomal_L7Ae"/>
    <property type="match status" value="1"/>
</dbReference>
<dbReference type="PRINTS" id="PR00881">
    <property type="entry name" value="L7ARS6FAMILY"/>
</dbReference>
<dbReference type="PRINTS" id="PR00884">
    <property type="entry name" value="RIBOSOMALHS6"/>
</dbReference>
<dbReference type="SUPFAM" id="SSF55315">
    <property type="entry name" value="L30e-like"/>
    <property type="match status" value="1"/>
</dbReference>
<dbReference type="PROSITE" id="PS01082">
    <property type="entry name" value="RIBOSOMAL_L7AE"/>
    <property type="match status" value="1"/>
</dbReference>
<feature type="chain" id="PRO_0000136794" description="Large ribosomal subunit protein eL8">
    <location>
        <begin position="1"/>
        <end position="123"/>
    </location>
</feature>
<proteinExistence type="inferred from homology"/>
<accession>Q8TV03</accession>
<gene>
    <name evidence="1" type="primary">rpl7ae</name>
    <name type="ordered locus">MK1598</name>
</gene>
<evidence type="ECO:0000255" key="1">
    <source>
        <dbReference type="HAMAP-Rule" id="MF_00326"/>
    </source>
</evidence>
<evidence type="ECO:0000305" key="2"/>
<keyword id="KW-0963">Cytoplasm</keyword>
<keyword id="KW-1185">Reference proteome</keyword>
<keyword id="KW-0687">Ribonucleoprotein</keyword>
<keyword id="KW-0689">Ribosomal protein</keyword>
<keyword id="KW-0694">RNA-binding</keyword>
<keyword id="KW-0699">rRNA-binding</keyword>
<keyword id="KW-0819">tRNA processing</keyword>